<protein>
    <recommendedName>
        <fullName evidence="1">UDP-N-acetylglucosamine--N-acetylmuramyl-(pentapeptide) pyrophosphoryl-undecaprenol N-acetylglucosamine transferase</fullName>
        <ecNumber evidence="1">2.4.1.227</ecNumber>
    </recommendedName>
    <alternativeName>
        <fullName evidence="1">Undecaprenyl-PP-MurNAc-pentapeptide-UDPGlcNAc GlcNAc transferase</fullName>
    </alternativeName>
</protein>
<feature type="chain" id="PRO_0000109210" description="UDP-N-acetylglucosamine--N-acetylmuramyl-(pentapeptide) pyrophosphoryl-undecaprenol N-acetylglucosamine transferase">
    <location>
        <begin position="1"/>
        <end position="356"/>
    </location>
</feature>
<feature type="binding site" evidence="1">
    <location>
        <position position="166"/>
    </location>
    <ligand>
        <name>UDP-N-acetyl-alpha-D-glucosamine</name>
        <dbReference type="ChEBI" id="CHEBI:57705"/>
    </ligand>
</feature>
<feature type="binding site" evidence="1">
    <location>
        <position position="196"/>
    </location>
    <ligand>
        <name>UDP-N-acetyl-alpha-D-glucosamine</name>
        <dbReference type="ChEBI" id="CHEBI:57705"/>
    </ligand>
</feature>
<feature type="binding site" evidence="1">
    <location>
        <position position="290"/>
    </location>
    <ligand>
        <name>UDP-N-acetyl-alpha-D-glucosamine</name>
        <dbReference type="ChEBI" id="CHEBI:57705"/>
    </ligand>
</feature>
<dbReference type="EC" id="2.4.1.227" evidence="1"/>
<dbReference type="EMBL" id="CP000046">
    <property type="protein sequence ID" value="AAW38198.1"/>
    <property type="molecule type" value="Genomic_DNA"/>
</dbReference>
<dbReference type="RefSeq" id="WP_000160904.1">
    <property type="nucleotide sequence ID" value="NZ_JBGOFO010000003.1"/>
</dbReference>
<dbReference type="SMR" id="Q5HG02"/>
<dbReference type="CAZy" id="GT28">
    <property type="family name" value="Glycosyltransferase Family 28"/>
</dbReference>
<dbReference type="KEGG" id="sac:SACOL1453"/>
<dbReference type="HOGENOM" id="CLU_037404_0_0_9"/>
<dbReference type="BioCyc" id="MetaCyc:MONOMER-12258"/>
<dbReference type="UniPathway" id="UPA00219"/>
<dbReference type="Proteomes" id="UP000000530">
    <property type="component" value="Chromosome"/>
</dbReference>
<dbReference type="GO" id="GO:0005886">
    <property type="term" value="C:plasma membrane"/>
    <property type="evidence" value="ECO:0007669"/>
    <property type="project" value="UniProtKB-SubCell"/>
</dbReference>
<dbReference type="GO" id="GO:0050511">
    <property type="term" value="F:undecaprenyldiphospho-muramoylpentapeptide beta-N-acetylglucosaminyltransferase activity"/>
    <property type="evidence" value="ECO:0007669"/>
    <property type="project" value="UniProtKB-UniRule"/>
</dbReference>
<dbReference type="GO" id="GO:0005975">
    <property type="term" value="P:carbohydrate metabolic process"/>
    <property type="evidence" value="ECO:0007669"/>
    <property type="project" value="InterPro"/>
</dbReference>
<dbReference type="GO" id="GO:0051301">
    <property type="term" value="P:cell division"/>
    <property type="evidence" value="ECO:0007669"/>
    <property type="project" value="UniProtKB-KW"/>
</dbReference>
<dbReference type="GO" id="GO:0071555">
    <property type="term" value="P:cell wall organization"/>
    <property type="evidence" value="ECO:0007669"/>
    <property type="project" value="UniProtKB-KW"/>
</dbReference>
<dbReference type="GO" id="GO:0030259">
    <property type="term" value="P:lipid glycosylation"/>
    <property type="evidence" value="ECO:0007669"/>
    <property type="project" value="UniProtKB-UniRule"/>
</dbReference>
<dbReference type="GO" id="GO:0009252">
    <property type="term" value="P:peptidoglycan biosynthetic process"/>
    <property type="evidence" value="ECO:0007669"/>
    <property type="project" value="UniProtKB-UniRule"/>
</dbReference>
<dbReference type="GO" id="GO:0008360">
    <property type="term" value="P:regulation of cell shape"/>
    <property type="evidence" value="ECO:0007669"/>
    <property type="project" value="UniProtKB-KW"/>
</dbReference>
<dbReference type="CDD" id="cd03785">
    <property type="entry name" value="GT28_MurG"/>
    <property type="match status" value="1"/>
</dbReference>
<dbReference type="Gene3D" id="3.40.50.2000">
    <property type="entry name" value="Glycogen Phosphorylase B"/>
    <property type="match status" value="2"/>
</dbReference>
<dbReference type="HAMAP" id="MF_00033">
    <property type="entry name" value="MurG"/>
    <property type="match status" value="1"/>
</dbReference>
<dbReference type="InterPro" id="IPR006009">
    <property type="entry name" value="GlcNAc_MurG"/>
</dbReference>
<dbReference type="InterPro" id="IPR007235">
    <property type="entry name" value="Glyco_trans_28_C"/>
</dbReference>
<dbReference type="InterPro" id="IPR004276">
    <property type="entry name" value="GlycoTrans_28_N"/>
</dbReference>
<dbReference type="NCBIfam" id="NF009102">
    <property type="entry name" value="PRK12446.1"/>
    <property type="match status" value="1"/>
</dbReference>
<dbReference type="PANTHER" id="PTHR21015:SF27">
    <property type="entry name" value="UDP-N-ACETYLGLUCOSAMINE--N-ACETYLMURAMYL-(PENTAPEPTIDE) PYROPHOSPHORYL-UNDECAPRENOL N-ACETYLGLUCOSAMINE TRANSFERASE"/>
    <property type="match status" value="1"/>
</dbReference>
<dbReference type="PANTHER" id="PTHR21015">
    <property type="entry name" value="UDP-N-ACETYLGLUCOSAMINE--N-ACETYLMURAMYL-(PENTAPEPTIDE) PYROPHOSPHORYL-UNDECAPRENOL N-ACETYLGLUCOSAMINE TRANSFERASE 1"/>
    <property type="match status" value="1"/>
</dbReference>
<dbReference type="Pfam" id="PF04101">
    <property type="entry name" value="Glyco_tran_28_C"/>
    <property type="match status" value="1"/>
</dbReference>
<dbReference type="Pfam" id="PF03033">
    <property type="entry name" value="Glyco_transf_28"/>
    <property type="match status" value="1"/>
</dbReference>
<dbReference type="SUPFAM" id="SSF53756">
    <property type="entry name" value="UDP-Glycosyltransferase/glycogen phosphorylase"/>
    <property type="match status" value="1"/>
</dbReference>
<organism>
    <name type="scientific">Staphylococcus aureus (strain COL)</name>
    <dbReference type="NCBI Taxonomy" id="93062"/>
    <lineage>
        <taxon>Bacteria</taxon>
        <taxon>Bacillati</taxon>
        <taxon>Bacillota</taxon>
        <taxon>Bacilli</taxon>
        <taxon>Bacillales</taxon>
        <taxon>Staphylococcaceae</taxon>
        <taxon>Staphylococcus</taxon>
    </lineage>
</organism>
<sequence>MTKIAFTGGGTVGHVSVNLSLIPTALSQGYEALYIGSKNGIEREMIESQLPEIKYYPISSGKLRRYISLENAKDVFKVLKGILDARKVLKKEKPDLLFSKGGFVSVPVVIAAKSLNIPTIIHESDLTPGLANKIALKFAKKIYTTFEETLNYLPKEKADFIGATIREDLKNGNAHNGYQLTGFNENKKVLLVMGGSLGSKKLNSIIRENLDALLQQYQVIHLTGKGLKDAQVKKSGYIQYEFVKEDLTDLLAITDTVISRAGSNAIYEFLTLRIPMLLVPLGLDQSRGDQIDNANHFADKGYAKAIDEEQLTAQILLQELNEMEQERTRIINNMKSYEQSYTKEALFDKMIKDALN</sequence>
<gene>
    <name evidence="1" type="primary">murG</name>
    <name type="ordered locus">SACOL1453</name>
</gene>
<accession>Q5HG02</accession>
<reference key="1">
    <citation type="journal article" date="2005" name="J. Bacteriol.">
        <title>Insights on evolution of virulence and resistance from the complete genome analysis of an early methicillin-resistant Staphylococcus aureus strain and a biofilm-producing methicillin-resistant Staphylococcus epidermidis strain.</title>
        <authorList>
            <person name="Gill S.R."/>
            <person name="Fouts D.E."/>
            <person name="Archer G.L."/>
            <person name="Mongodin E.F."/>
            <person name="DeBoy R.T."/>
            <person name="Ravel J."/>
            <person name="Paulsen I.T."/>
            <person name="Kolonay J.F."/>
            <person name="Brinkac L.M."/>
            <person name="Beanan M.J."/>
            <person name="Dodson R.J."/>
            <person name="Daugherty S.C."/>
            <person name="Madupu R."/>
            <person name="Angiuoli S.V."/>
            <person name="Durkin A.S."/>
            <person name="Haft D.H."/>
            <person name="Vamathevan J.J."/>
            <person name="Khouri H."/>
            <person name="Utterback T.R."/>
            <person name="Lee C."/>
            <person name="Dimitrov G."/>
            <person name="Jiang L."/>
            <person name="Qin H."/>
            <person name="Weidman J."/>
            <person name="Tran K."/>
            <person name="Kang K.H."/>
            <person name="Hance I.R."/>
            <person name="Nelson K.E."/>
            <person name="Fraser C.M."/>
        </authorList>
    </citation>
    <scope>NUCLEOTIDE SEQUENCE [LARGE SCALE GENOMIC DNA]</scope>
    <source>
        <strain>COL</strain>
    </source>
</reference>
<evidence type="ECO:0000255" key="1">
    <source>
        <dbReference type="HAMAP-Rule" id="MF_00033"/>
    </source>
</evidence>
<proteinExistence type="inferred from homology"/>
<keyword id="KW-0131">Cell cycle</keyword>
<keyword id="KW-0132">Cell division</keyword>
<keyword id="KW-1003">Cell membrane</keyword>
<keyword id="KW-0133">Cell shape</keyword>
<keyword id="KW-0961">Cell wall biogenesis/degradation</keyword>
<keyword id="KW-0328">Glycosyltransferase</keyword>
<keyword id="KW-0472">Membrane</keyword>
<keyword id="KW-0573">Peptidoglycan synthesis</keyword>
<keyword id="KW-0808">Transferase</keyword>
<comment type="function">
    <text evidence="1">Cell wall formation. Catalyzes the transfer of a GlcNAc subunit on undecaprenyl-pyrophosphoryl-MurNAc-pentapeptide (lipid intermediate I) to form undecaprenyl-pyrophosphoryl-MurNAc-(pentapeptide)GlcNAc (lipid intermediate II).</text>
</comment>
<comment type="catalytic activity">
    <reaction evidence="1">
        <text>Mur2Ac(oyl-L-Ala-gamma-D-Glu-L-Lys-D-Ala-D-Ala)-di-trans,octa-cis-undecaprenyl diphosphate + UDP-N-acetyl-alpha-D-glucosamine = beta-D-GlcNAc-(1-&gt;4)-Mur2Ac(oyl-L-Ala-gamma-D-Glu-L-Lys-D-Ala-D-Ala)-di-trans,octa-cis-undecaprenyl diphosphate + UDP + H(+)</text>
        <dbReference type="Rhea" id="RHEA:23192"/>
        <dbReference type="ChEBI" id="CHEBI:15378"/>
        <dbReference type="ChEBI" id="CHEBI:57705"/>
        <dbReference type="ChEBI" id="CHEBI:58223"/>
        <dbReference type="ChEBI" id="CHEBI:60032"/>
        <dbReference type="ChEBI" id="CHEBI:60033"/>
        <dbReference type="EC" id="2.4.1.227"/>
    </reaction>
</comment>
<comment type="pathway">
    <text evidence="1">Cell wall biogenesis; peptidoglycan biosynthesis.</text>
</comment>
<comment type="subcellular location">
    <subcellularLocation>
        <location evidence="1">Cell membrane</location>
        <topology evidence="1">Peripheral membrane protein</topology>
        <orientation evidence="1">Cytoplasmic side</orientation>
    </subcellularLocation>
</comment>
<comment type="similarity">
    <text evidence="1">Belongs to the glycosyltransferase 28 family. MurG subfamily.</text>
</comment>
<name>MURG_STAAC</name>